<evidence type="ECO:0000255" key="1">
    <source>
        <dbReference type="PROSITE-ProRule" id="PRU00303"/>
    </source>
</evidence>
<evidence type="ECO:0000305" key="2"/>
<keyword id="KW-1003">Cell membrane</keyword>
<keyword id="KW-0449">Lipoprotein</keyword>
<keyword id="KW-0472">Membrane</keyword>
<keyword id="KW-0564">Palmitate</keyword>
<keyword id="KW-1185">Reference proteome</keyword>
<keyword id="KW-0732">Signal</keyword>
<feature type="signal peptide" evidence="1">
    <location>
        <begin position="1"/>
        <end position="20"/>
    </location>
</feature>
<feature type="chain" id="PRO_0000013837" description="Uncharacterized lipoprotein YdcL">
    <location>
        <begin position="21"/>
        <end position="222"/>
    </location>
</feature>
<feature type="lipid moiety-binding region" description="N-palmitoyl cysteine" evidence="1">
    <location>
        <position position="21"/>
    </location>
</feature>
<feature type="lipid moiety-binding region" description="S-diacylglycerol cysteine" evidence="1">
    <location>
        <position position="21"/>
    </location>
</feature>
<comment type="subcellular location">
    <subcellularLocation>
        <location evidence="2">Cell membrane</location>
        <topology evidence="2">Lipid-anchor</topology>
    </subcellularLocation>
</comment>
<accession>P64452</accession>
<accession>P76101</accession>
<protein>
    <recommendedName>
        <fullName>Uncharacterized lipoprotein YdcL</fullName>
    </recommendedName>
</protein>
<reference key="1">
    <citation type="journal article" date="2001" name="Nature">
        <title>Genome sequence of enterohaemorrhagic Escherichia coli O157:H7.</title>
        <authorList>
            <person name="Perna N.T."/>
            <person name="Plunkett G. III"/>
            <person name="Burland V."/>
            <person name="Mau B."/>
            <person name="Glasner J.D."/>
            <person name="Rose D.J."/>
            <person name="Mayhew G.F."/>
            <person name="Evans P.S."/>
            <person name="Gregor J."/>
            <person name="Kirkpatrick H.A."/>
            <person name="Posfai G."/>
            <person name="Hackett J."/>
            <person name="Klink S."/>
            <person name="Boutin A."/>
            <person name="Shao Y."/>
            <person name="Miller L."/>
            <person name="Grotbeck E.J."/>
            <person name="Davis N.W."/>
            <person name="Lim A."/>
            <person name="Dimalanta E.T."/>
            <person name="Potamousis K."/>
            <person name="Apodaca J."/>
            <person name="Anantharaman T.S."/>
            <person name="Lin J."/>
            <person name="Yen G."/>
            <person name="Schwartz D.C."/>
            <person name="Welch R.A."/>
            <person name="Blattner F.R."/>
        </authorList>
    </citation>
    <scope>NUCLEOTIDE SEQUENCE [LARGE SCALE GENOMIC DNA]</scope>
    <source>
        <strain>O157:H7 / EDL933 / ATCC 700927 / EHEC</strain>
    </source>
</reference>
<reference key="2">
    <citation type="journal article" date="2001" name="DNA Res.">
        <title>Complete genome sequence of enterohemorrhagic Escherichia coli O157:H7 and genomic comparison with a laboratory strain K-12.</title>
        <authorList>
            <person name="Hayashi T."/>
            <person name="Makino K."/>
            <person name="Ohnishi M."/>
            <person name="Kurokawa K."/>
            <person name="Ishii K."/>
            <person name="Yokoyama K."/>
            <person name="Han C.-G."/>
            <person name="Ohtsubo E."/>
            <person name="Nakayama K."/>
            <person name="Murata T."/>
            <person name="Tanaka M."/>
            <person name="Tobe T."/>
            <person name="Iida T."/>
            <person name="Takami H."/>
            <person name="Honda T."/>
            <person name="Sasakawa C."/>
            <person name="Ogasawara N."/>
            <person name="Yasunaga T."/>
            <person name="Kuhara S."/>
            <person name="Shiba T."/>
            <person name="Hattori M."/>
            <person name="Shinagawa H."/>
        </authorList>
    </citation>
    <scope>NUCLEOTIDE SEQUENCE [LARGE SCALE GENOMIC DNA]</scope>
    <source>
        <strain>O157:H7 / Sakai / RIMD 0509952 / EHEC</strain>
    </source>
</reference>
<dbReference type="EMBL" id="AE005174">
    <property type="protein sequence ID" value="AAG56343.1"/>
    <property type="molecule type" value="Genomic_DNA"/>
</dbReference>
<dbReference type="EMBL" id="BA000007">
    <property type="protein sequence ID" value="BAB35459.1"/>
    <property type="molecule type" value="Genomic_DNA"/>
</dbReference>
<dbReference type="PIR" id="C85735">
    <property type="entry name" value="C85735"/>
</dbReference>
<dbReference type="PIR" id="D90883">
    <property type="entry name" value="D90883"/>
</dbReference>
<dbReference type="RefSeq" id="NP_310063.1">
    <property type="nucleotide sequence ID" value="NC_002695.1"/>
</dbReference>
<dbReference type="RefSeq" id="WP_001261013.1">
    <property type="nucleotide sequence ID" value="NZ_VOAI01000022.1"/>
</dbReference>
<dbReference type="SMR" id="P64452"/>
<dbReference type="STRING" id="155864.Z2287"/>
<dbReference type="GeneID" id="917234"/>
<dbReference type="KEGG" id="ece:Z2287"/>
<dbReference type="KEGG" id="ecs:ECs_2036"/>
<dbReference type="PATRIC" id="fig|386585.9.peg.2136"/>
<dbReference type="eggNOG" id="ENOG502Z8IX">
    <property type="taxonomic scope" value="Bacteria"/>
</dbReference>
<dbReference type="HOGENOM" id="CLU_088489_0_1_6"/>
<dbReference type="OMA" id="SGHRTQN"/>
<dbReference type="Proteomes" id="UP000000558">
    <property type="component" value="Chromosome"/>
</dbReference>
<dbReference type="Proteomes" id="UP000002519">
    <property type="component" value="Chromosome"/>
</dbReference>
<dbReference type="GO" id="GO:0005886">
    <property type="term" value="C:plasma membrane"/>
    <property type="evidence" value="ECO:0007669"/>
    <property type="project" value="UniProtKB-SubCell"/>
</dbReference>
<dbReference type="InterPro" id="IPR021747">
    <property type="entry name" value="DUF3313"/>
</dbReference>
<dbReference type="Pfam" id="PF11769">
    <property type="entry name" value="DUF3313"/>
    <property type="match status" value="1"/>
</dbReference>
<dbReference type="PROSITE" id="PS51257">
    <property type="entry name" value="PROKAR_LIPOPROTEIN"/>
    <property type="match status" value="1"/>
</dbReference>
<proteinExistence type="inferred from homology"/>
<name>YDCL_ECO57</name>
<sequence length="222" mass="24427">MRTTSFAKVAALCGLLALSGCASKITQPDKYSGFLNNYSDLKETTSATGKPVLRWVDPSFDQSKYDSIVWNPITYYPVPKPSTQVGQKVLDKILNYTNTEMKEAIAQRKPLVTTAGPRSLIFRGAITGVDTSKEGLQFYEVVPVALVVAGTQMATGHRTMDTRLYFEGELIDAATNKPVIKVVRQGEGKDLNNESTPMAFENIKQVIDDMATDATMFDVNKK</sequence>
<organism>
    <name type="scientific">Escherichia coli O157:H7</name>
    <dbReference type="NCBI Taxonomy" id="83334"/>
    <lineage>
        <taxon>Bacteria</taxon>
        <taxon>Pseudomonadati</taxon>
        <taxon>Pseudomonadota</taxon>
        <taxon>Gammaproteobacteria</taxon>
        <taxon>Enterobacterales</taxon>
        <taxon>Enterobacteriaceae</taxon>
        <taxon>Escherichia</taxon>
    </lineage>
</organism>
<gene>
    <name type="primary">ydcL</name>
    <name type="ordered locus">Z2287</name>
    <name type="ordered locus">ECs2036</name>
</gene>